<organism>
    <name type="scientific">Streptococcus pyogenes serotype M12 (strain MGAS9429)</name>
    <dbReference type="NCBI Taxonomy" id="370551"/>
    <lineage>
        <taxon>Bacteria</taxon>
        <taxon>Bacillati</taxon>
        <taxon>Bacillota</taxon>
        <taxon>Bacilli</taxon>
        <taxon>Lactobacillales</taxon>
        <taxon>Streptococcaceae</taxon>
        <taxon>Streptococcus</taxon>
    </lineage>
</organism>
<keyword id="KW-0066">ATP synthesis</keyword>
<keyword id="KW-0067">ATP-binding</keyword>
<keyword id="KW-1003">Cell membrane</keyword>
<keyword id="KW-0139">CF(1)</keyword>
<keyword id="KW-0375">Hydrogen ion transport</keyword>
<keyword id="KW-0406">Ion transport</keyword>
<keyword id="KW-0472">Membrane</keyword>
<keyword id="KW-0547">Nucleotide-binding</keyword>
<keyword id="KW-1278">Translocase</keyword>
<keyword id="KW-0813">Transport</keyword>
<reference key="1">
    <citation type="journal article" date="2006" name="Proc. Natl. Acad. Sci. U.S.A.">
        <title>Molecular genetic anatomy of inter- and intraserotype variation in the human bacterial pathogen group A Streptococcus.</title>
        <authorList>
            <person name="Beres S.B."/>
            <person name="Richter E.W."/>
            <person name="Nagiec M.J."/>
            <person name="Sumby P."/>
            <person name="Porcella S.F."/>
            <person name="DeLeo F.R."/>
            <person name="Musser J.M."/>
        </authorList>
    </citation>
    <scope>NUCLEOTIDE SEQUENCE [LARGE SCALE GENOMIC DNA]</scope>
    <source>
        <strain>MGAS9429</strain>
    </source>
</reference>
<evidence type="ECO:0000255" key="1">
    <source>
        <dbReference type="HAMAP-Rule" id="MF_01346"/>
    </source>
</evidence>
<sequence length="502" mass="54685">MAINAQEISALIKKQIENFQPNFDVTETGIVTYIGDGIARARGLDNAMSGELLEFENGAYGMAQNLESNDVGIIILGDFSAIREGDVVKRTGKIMEVPVGEALIGRVVNPLGQPVDGLGDIETTGFRPVETPAPGVMQRKSVSEPLQTGLKAIDALVPIGRGQRELIIGDRQTGKTSVAIDAILNQKGQDMICIYVAIGQKESTVRTQVETLRRYGALDYTIVVTASASQPSPLLFIAPYAGVAMAEEFMYQGKHVLIVYDDLSKQAVAYRELSLLLRRPPGREAYPGDVFYLHSRLLERSAKVSDDLGGGSITALPFIETQAGDISAYIATNVISITDGQIFLQENLFNSGIRPAIDAGSSVSRVGGSAQIKAMKKVAGTLRLDLASYRELEAFTQFGSDLDAATQAKLNRGRRTVEILKQPLHKPLPVEKQVVILYALTHGFLDDVPVDDILAFEEALYDYFDVHYNDLFETIRTTKDLPEEAALDAAIKAFKEHSNFKS</sequence>
<proteinExistence type="inferred from homology"/>
<accession>Q1JMJ1</accession>
<feature type="chain" id="PRO_0000256116" description="ATP synthase subunit alpha">
    <location>
        <begin position="1"/>
        <end position="502"/>
    </location>
</feature>
<feature type="binding site" evidence="1">
    <location>
        <begin position="169"/>
        <end position="176"/>
    </location>
    <ligand>
        <name>ATP</name>
        <dbReference type="ChEBI" id="CHEBI:30616"/>
    </ligand>
</feature>
<feature type="site" description="Required for activity" evidence="1">
    <location>
        <position position="362"/>
    </location>
</feature>
<comment type="function">
    <text evidence="1">Produces ATP from ADP in the presence of a proton gradient across the membrane. The alpha chain is a regulatory subunit.</text>
</comment>
<comment type="catalytic activity">
    <reaction evidence="1">
        <text>ATP + H2O + 4 H(+)(in) = ADP + phosphate + 5 H(+)(out)</text>
        <dbReference type="Rhea" id="RHEA:57720"/>
        <dbReference type="ChEBI" id="CHEBI:15377"/>
        <dbReference type="ChEBI" id="CHEBI:15378"/>
        <dbReference type="ChEBI" id="CHEBI:30616"/>
        <dbReference type="ChEBI" id="CHEBI:43474"/>
        <dbReference type="ChEBI" id="CHEBI:456216"/>
        <dbReference type="EC" id="7.1.2.2"/>
    </reaction>
</comment>
<comment type="subunit">
    <text evidence="1">F-type ATPases have 2 components, CF(1) - the catalytic core - and CF(0) - the membrane proton channel. CF(1) has five subunits: alpha(3), beta(3), gamma(1), delta(1), epsilon(1). CF(0) has three main subunits: a(1), b(2) and c(9-12). The alpha and beta chains form an alternating ring which encloses part of the gamma chain. CF(1) is attached to CF(0) by a central stalk formed by the gamma and epsilon chains, while a peripheral stalk is formed by the delta and b chains.</text>
</comment>
<comment type="subcellular location">
    <subcellularLocation>
        <location evidence="1">Cell membrane</location>
        <topology evidence="1">Peripheral membrane protein</topology>
    </subcellularLocation>
</comment>
<comment type="similarity">
    <text evidence="1">Belongs to the ATPase alpha/beta chains family.</text>
</comment>
<protein>
    <recommendedName>
        <fullName evidence="1">ATP synthase subunit alpha</fullName>
        <ecNumber evidence="1">7.1.2.2</ecNumber>
    </recommendedName>
    <alternativeName>
        <fullName evidence="1">ATP synthase F1 sector subunit alpha</fullName>
    </alternativeName>
    <alternativeName>
        <fullName evidence="1">F-ATPase subunit alpha</fullName>
    </alternativeName>
</protein>
<gene>
    <name evidence="1" type="primary">atpA</name>
    <name type="ordered locus">MGAS9429_Spy0633</name>
</gene>
<dbReference type="EC" id="7.1.2.2" evidence="1"/>
<dbReference type="EMBL" id="CP000259">
    <property type="protein sequence ID" value="ABF31821.1"/>
    <property type="molecule type" value="Genomic_DNA"/>
</dbReference>
<dbReference type="RefSeq" id="WP_002985238.1">
    <property type="nucleotide sequence ID" value="NC_008021.1"/>
</dbReference>
<dbReference type="SMR" id="Q1JMJ1"/>
<dbReference type="KEGG" id="spk:MGAS9429_Spy0633"/>
<dbReference type="HOGENOM" id="CLU_010091_2_1_9"/>
<dbReference type="Proteomes" id="UP000002433">
    <property type="component" value="Chromosome"/>
</dbReference>
<dbReference type="GO" id="GO:0005886">
    <property type="term" value="C:plasma membrane"/>
    <property type="evidence" value="ECO:0007669"/>
    <property type="project" value="UniProtKB-SubCell"/>
</dbReference>
<dbReference type="GO" id="GO:0045259">
    <property type="term" value="C:proton-transporting ATP synthase complex"/>
    <property type="evidence" value="ECO:0007669"/>
    <property type="project" value="UniProtKB-KW"/>
</dbReference>
<dbReference type="GO" id="GO:0043531">
    <property type="term" value="F:ADP binding"/>
    <property type="evidence" value="ECO:0007669"/>
    <property type="project" value="TreeGrafter"/>
</dbReference>
<dbReference type="GO" id="GO:0005524">
    <property type="term" value="F:ATP binding"/>
    <property type="evidence" value="ECO:0007669"/>
    <property type="project" value="UniProtKB-UniRule"/>
</dbReference>
<dbReference type="GO" id="GO:0046933">
    <property type="term" value="F:proton-transporting ATP synthase activity, rotational mechanism"/>
    <property type="evidence" value="ECO:0007669"/>
    <property type="project" value="UniProtKB-UniRule"/>
</dbReference>
<dbReference type="CDD" id="cd18113">
    <property type="entry name" value="ATP-synt_F1_alpha_C"/>
    <property type="match status" value="1"/>
</dbReference>
<dbReference type="CDD" id="cd18116">
    <property type="entry name" value="ATP-synt_F1_alpha_N"/>
    <property type="match status" value="1"/>
</dbReference>
<dbReference type="CDD" id="cd01132">
    <property type="entry name" value="F1-ATPase_alpha_CD"/>
    <property type="match status" value="1"/>
</dbReference>
<dbReference type="FunFam" id="1.20.150.20:FF:000001">
    <property type="entry name" value="ATP synthase subunit alpha"/>
    <property type="match status" value="1"/>
</dbReference>
<dbReference type="FunFam" id="2.40.30.20:FF:000001">
    <property type="entry name" value="ATP synthase subunit alpha"/>
    <property type="match status" value="1"/>
</dbReference>
<dbReference type="FunFam" id="3.40.50.300:FF:000002">
    <property type="entry name" value="ATP synthase subunit alpha"/>
    <property type="match status" value="1"/>
</dbReference>
<dbReference type="Gene3D" id="2.40.30.20">
    <property type="match status" value="1"/>
</dbReference>
<dbReference type="Gene3D" id="1.20.150.20">
    <property type="entry name" value="ATP synthase alpha/beta chain, C-terminal domain"/>
    <property type="match status" value="1"/>
</dbReference>
<dbReference type="Gene3D" id="3.40.50.300">
    <property type="entry name" value="P-loop containing nucleotide triphosphate hydrolases"/>
    <property type="match status" value="1"/>
</dbReference>
<dbReference type="HAMAP" id="MF_01346">
    <property type="entry name" value="ATP_synth_alpha_bact"/>
    <property type="match status" value="1"/>
</dbReference>
<dbReference type="InterPro" id="IPR023366">
    <property type="entry name" value="ATP_synth_asu-like_sf"/>
</dbReference>
<dbReference type="InterPro" id="IPR000793">
    <property type="entry name" value="ATP_synth_asu_C"/>
</dbReference>
<dbReference type="InterPro" id="IPR038376">
    <property type="entry name" value="ATP_synth_asu_C_sf"/>
</dbReference>
<dbReference type="InterPro" id="IPR033732">
    <property type="entry name" value="ATP_synth_F1_a_nt-bd_dom"/>
</dbReference>
<dbReference type="InterPro" id="IPR005294">
    <property type="entry name" value="ATP_synth_F1_asu"/>
</dbReference>
<dbReference type="InterPro" id="IPR004100">
    <property type="entry name" value="ATPase_F1/V1/A1_a/bsu_N"/>
</dbReference>
<dbReference type="InterPro" id="IPR036121">
    <property type="entry name" value="ATPase_F1/V1/A1_a/bsu_N_sf"/>
</dbReference>
<dbReference type="InterPro" id="IPR000194">
    <property type="entry name" value="ATPase_F1/V1/A1_a/bsu_nucl-bd"/>
</dbReference>
<dbReference type="InterPro" id="IPR027417">
    <property type="entry name" value="P-loop_NTPase"/>
</dbReference>
<dbReference type="NCBIfam" id="TIGR00962">
    <property type="entry name" value="atpA"/>
    <property type="match status" value="1"/>
</dbReference>
<dbReference type="NCBIfam" id="NF009884">
    <property type="entry name" value="PRK13343.1"/>
    <property type="match status" value="1"/>
</dbReference>
<dbReference type="PANTHER" id="PTHR48082">
    <property type="entry name" value="ATP SYNTHASE SUBUNIT ALPHA, MITOCHONDRIAL"/>
    <property type="match status" value="1"/>
</dbReference>
<dbReference type="PANTHER" id="PTHR48082:SF2">
    <property type="entry name" value="ATP SYNTHASE SUBUNIT ALPHA, MITOCHONDRIAL"/>
    <property type="match status" value="1"/>
</dbReference>
<dbReference type="Pfam" id="PF00006">
    <property type="entry name" value="ATP-synt_ab"/>
    <property type="match status" value="1"/>
</dbReference>
<dbReference type="Pfam" id="PF00306">
    <property type="entry name" value="ATP-synt_ab_C"/>
    <property type="match status" value="1"/>
</dbReference>
<dbReference type="Pfam" id="PF02874">
    <property type="entry name" value="ATP-synt_ab_N"/>
    <property type="match status" value="1"/>
</dbReference>
<dbReference type="PIRSF" id="PIRSF039088">
    <property type="entry name" value="F_ATPase_subunit_alpha"/>
    <property type="match status" value="1"/>
</dbReference>
<dbReference type="SUPFAM" id="SSF47917">
    <property type="entry name" value="C-terminal domain of alpha and beta subunits of F1 ATP synthase"/>
    <property type="match status" value="1"/>
</dbReference>
<dbReference type="SUPFAM" id="SSF50615">
    <property type="entry name" value="N-terminal domain of alpha and beta subunits of F1 ATP synthase"/>
    <property type="match status" value="1"/>
</dbReference>
<dbReference type="SUPFAM" id="SSF52540">
    <property type="entry name" value="P-loop containing nucleoside triphosphate hydrolases"/>
    <property type="match status" value="1"/>
</dbReference>
<name>ATPA_STRPC</name>